<gene>
    <name evidence="1" type="primary">atpG</name>
    <name type="ordered locus">Mlg_2870</name>
</gene>
<keyword id="KW-0066">ATP synthesis</keyword>
<keyword id="KW-0997">Cell inner membrane</keyword>
<keyword id="KW-1003">Cell membrane</keyword>
<keyword id="KW-0139">CF(1)</keyword>
<keyword id="KW-0375">Hydrogen ion transport</keyword>
<keyword id="KW-0406">Ion transport</keyword>
<keyword id="KW-0472">Membrane</keyword>
<keyword id="KW-1185">Reference proteome</keyword>
<keyword id="KW-0813">Transport</keyword>
<accession>Q0A4M7</accession>
<proteinExistence type="inferred from homology"/>
<sequence length="287" mass="32014">MSGAKEVRTKIKSVQNTQKITKAMEMVAASKMRRAQERMEATRPYAQKMRQVIGHLAGANPDYRHPFLEEREKVERVGLVVISTDRGLCGGLNVNLFKSVLQQMREWDKQGVGVDFCTFGAKAAAFFGRLGASTLADTRGLGDTPHLEDMIGPIKVMLDAYTEGKIDRLYLVHNDFVNTMSQEAATRRLLPVEPVDEEEMLENWDYIYEPSASELLDDVLMRYIESQVYQGVVENVACEMAARMVAMKSATDNAGEIIDNLQLVYNKARQAAITQELSEIVAGANAV</sequence>
<evidence type="ECO:0000255" key="1">
    <source>
        <dbReference type="HAMAP-Rule" id="MF_00815"/>
    </source>
</evidence>
<protein>
    <recommendedName>
        <fullName evidence="1">ATP synthase gamma chain</fullName>
    </recommendedName>
    <alternativeName>
        <fullName evidence="1">ATP synthase F1 sector gamma subunit</fullName>
    </alternativeName>
    <alternativeName>
        <fullName evidence="1">F-ATPase gamma subunit</fullName>
    </alternativeName>
</protein>
<feature type="chain" id="PRO_1000053150" description="ATP synthase gamma chain">
    <location>
        <begin position="1"/>
        <end position="287"/>
    </location>
</feature>
<organism>
    <name type="scientific">Alkalilimnicola ehrlichii (strain ATCC BAA-1101 / DSM 17681 / MLHE-1)</name>
    <dbReference type="NCBI Taxonomy" id="187272"/>
    <lineage>
        <taxon>Bacteria</taxon>
        <taxon>Pseudomonadati</taxon>
        <taxon>Pseudomonadota</taxon>
        <taxon>Gammaproteobacteria</taxon>
        <taxon>Chromatiales</taxon>
        <taxon>Ectothiorhodospiraceae</taxon>
        <taxon>Alkalilimnicola</taxon>
    </lineage>
</organism>
<comment type="function">
    <text evidence="1">Produces ATP from ADP in the presence of a proton gradient across the membrane. The gamma chain is believed to be important in regulating ATPase activity and the flow of protons through the CF(0) complex.</text>
</comment>
<comment type="subunit">
    <text evidence="1">F-type ATPases have 2 components, CF(1) - the catalytic core - and CF(0) - the membrane proton channel. CF(1) has five subunits: alpha(3), beta(3), gamma(1), delta(1), epsilon(1). CF(0) has three main subunits: a, b and c.</text>
</comment>
<comment type="subcellular location">
    <subcellularLocation>
        <location evidence="1">Cell inner membrane</location>
        <topology evidence="1">Peripheral membrane protein</topology>
    </subcellularLocation>
</comment>
<comment type="similarity">
    <text evidence="1">Belongs to the ATPase gamma chain family.</text>
</comment>
<reference key="1">
    <citation type="submission" date="2006-08" db="EMBL/GenBank/DDBJ databases">
        <title>Complete sequence of Alkalilimnicola ehrilichei MLHE-1.</title>
        <authorList>
            <person name="Copeland A."/>
            <person name="Lucas S."/>
            <person name="Lapidus A."/>
            <person name="Barry K."/>
            <person name="Detter J.C."/>
            <person name="Glavina del Rio T."/>
            <person name="Hammon N."/>
            <person name="Israni S."/>
            <person name="Dalin E."/>
            <person name="Tice H."/>
            <person name="Pitluck S."/>
            <person name="Sims D."/>
            <person name="Brettin T."/>
            <person name="Bruce D."/>
            <person name="Han C."/>
            <person name="Tapia R."/>
            <person name="Gilna P."/>
            <person name="Schmutz J."/>
            <person name="Larimer F."/>
            <person name="Land M."/>
            <person name="Hauser L."/>
            <person name="Kyrpides N."/>
            <person name="Mikhailova N."/>
            <person name="Oremland R.S."/>
            <person name="Hoeft S.E."/>
            <person name="Switzer-Blum J."/>
            <person name="Kulp T."/>
            <person name="King G."/>
            <person name="Tabita R."/>
            <person name="Witte B."/>
            <person name="Santini J.M."/>
            <person name="Basu P."/>
            <person name="Hollibaugh J.T."/>
            <person name="Xie G."/>
            <person name="Stolz J.F."/>
            <person name="Richardson P."/>
        </authorList>
    </citation>
    <scope>NUCLEOTIDE SEQUENCE [LARGE SCALE GENOMIC DNA]</scope>
    <source>
        <strain>ATCC BAA-1101 / DSM 17681 / MLHE-1</strain>
    </source>
</reference>
<name>ATPG_ALKEH</name>
<dbReference type="EMBL" id="CP000453">
    <property type="protein sequence ID" value="ABI58210.1"/>
    <property type="molecule type" value="Genomic_DNA"/>
</dbReference>
<dbReference type="RefSeq" id="WP_011630603.1">
    <property type="nucleotide sequence ID" value="NC_008340.1"/>
</dbReference>
<dbReference type="SMR" id="Q0A4M7"/>
<dbReference type="KEGG" id="aeh:Mlg_2870"/>
<dbReference type="eggNOG" id="COG0224">
    <property type="taxonomic scope" value="Bacteria"/>
</dbReference>
<dbReference type="HOGENOM" id="CLU_050669_0_1_6"/>
<dbReference type="OrthoDB" id="9812769at2"/>
<dbReference type="Proteomes" id="UP000001962">
    <property type="component" value="Chromosome"/>
</dbReference>
<dbReference type="GO" id="GO:0005886">
    <property type="term" value="C:plasma membrane"/>
    <property type="evidence" value="ECO:0007669"/>
    <property type="project" value="UniProtKB-SubCell"/>
</dbReference>
<dbReference type="GO" id="GO:0045259">
    <property type="term" value="C:proton-transporting ATP synthase complex"/>
    <property type="evidence" value="ECO:0007669"/>
    <property type="project" value="UniProtKB-KW"/>
</dbReference>
<dbReference type="GO" id="GO:0005524">
    <property type="term" value="F:ATP binding"/>
    <property type="evidence" value="ECO:0007669"/>
    <property type="project" value="UniProtKB-UniRule"/>
</dbReference>
<dbReference type="GO" id="GO:0046933">
    <property type="term" value="F:proton-transporting ATP synthase activity, rotational mechanism"/>
    <property type="evidence" value="ECO:0007669"/>
    <property type="project" value="UniProtKB-UniRule"/>
</dbReference>
<dbReference type="GO" id="GO:0042777">
    <property type="term" value="P:proton motive force-driven plasma membrane ATP synthesis"/>
    <property type="evidence" value="ECO:0007669"/>
    <property type="project" value="UniProtKB-UniRule"/>
</dbReference>
<dbReference type="CDD" id="cd12151">
    <property type="entry name" value="F1-ATPase_gamma"/>
    <property type="match status" value="1"/>
</dbReference>
<dbReference type="FunFam" id="1.10.287.80:FF:000005">
    <property type="entry name" value="ATP synthase gamma chain"/>
    <property type="match status" value="2"/>
</dbReference>
<dbReference type="Gene3D" id="3.40.1380.10">
    <property type="match status" value="1"/>
</dbReference>
<dbReference type="Gene3D" id="1.10.287.80">
    <property type="entry name" value="ATP synthase, gamma subunit, helix hairpin domain"/>
    <property type="match status" value="1"/>
</dbReference>
<dbReference type="HAMAP" id="MF_00815">
    <property type="entry name" value="ATP_synth_gamma_bact"/>
    <property type="match status" value="1"/>
</dbReference>
<dbReference type="InterPro" id="IPR035968">
    <property type="entry name" value="ATP_synth_F1_ATPase_gsu"/>
</dbReference>
<dbReference type="InterPro" id="IPR000131">
    <property type="entry name" value="ATP_synth_F1_gsu"/>
</dbReference>
<dbReference type="InterPro" id="IPR023632">
    <property type="entry name" value="ATP_synth_F1_gsu_CS"/>
</dbReference>
<dbReference type="NCBIfam" id="TIGR01146">
    <property type="entry name" value="ATPsyn_F1gamma"/>
    <property type="match status" value="1"/>
</dbReference>
<dbReference type="NCBIfam" id="NF004144">
    <property type="entry name" value="PRK05621.1-1"/>
    <property type="match status" value="1"/>
</dbReference>
<dbReference type="PANTHER" id="PTHR11693">
    <property type="entry name" value="ATP SYNTHASE GAMMA CHAIN"/>
    <property type="match status" value="1"/>
</dbReference>
<dbReference type="PANTHER" id="PTHR11693:SF22">
    <property type="entry name" value="ATP SYNTHASE SUBUNIT GAMMA, MITOCHONDRIAL"/>
    <property type="match status" value="1"/>
</dbReference>
<dbReference type="Pfam" id="PF00231">
    <property type="entry name" value="ATP-synt"/>
    <property type="match status" value="1"/>
</dbReference>
<dbReference type="PRINTS" id="PR00126">
    <property type="entry name" value="ATPASEGAMMA"/>
</dbReference>
<dbReference type="SUPFAM" id="SSF52943">
    <property type="entry name" value="ATP synthase (F1-ATPase), gamma subunit"/>
    <property type="match status" value="1"/>
</dbReference>
<dbReference type="PROSITE" id="PS00153">
    <property type="entry name" value="ATPASE_GAMMA"/>
    <property type="match status" value="1"/>
</dbReference>